<evidence type="ECO:0000250" key="1">
    <source>
        <dbReference type="UniProtKB" id="Q8BZH0"/>
    </source>
</evidence>
<evidence type="ECO:0000250" key="2">
    <source>
        <dbReference type="UniProtKB" id="Q96H72"/>
    </source>
</evidence>
<evidence type="ECO:0000255" key="3"/>
<evidence type="ECO:0000305" key="4"/>
<proteinExistence type="evidence at transcript level"/>
<gene>
    <name evidence="2" type="primary">SLC39A13</name>
    <name type="synonym">ZIP13</name>
</gene>
<protein>
    <recommendedName>
        <fullName evidence="1">Zinc transporter ZIP13</fullName>
    </recommendedName>
    <alternativeName>
        <fullName>Solute carrier family 39 member 13</fullName>
    </alternativeName>
    <alternativeName>
        <fullName>Zrt- and Irt-like protein 13</fullName>
        <shortName>ZIP-13</shortName>
    </alternativeName>
</protein>
<accession>Q5R6I6</accession>
<dbReference type="EMBL" id="CR860503">
    <property type="protein sequence ID" value="CAH92624.1"/>
    <property type="molecule type" value="mRNA"/>
</dbReference>
<dbReference type="RefSeq" id="NP_001127570.1">
    <property type="nucleotide sequence ID" value="NM_001134098.1"/>
</dbReference>
<dbReference type="SMR" id="Q5R6I6"/>
<dbReference type="FunCoup" id="Q5R6I6">
    <property type="interactions" value="1207"/>
</dbReference>
<dbReference type="STRING" id="9601.ENSPPYP00000003792"/>
<dbReference type="Ensembl" id="ENSPPYT00000045661.1">
    <property type="protein sequence ID" value="ENSPPYP00000037686.1"/>
    <property type="gene ID" value="ENSPPYG00000003305.3"/>
</dbReference>
<dbReference type="GeneID" id="100174648"/>
<dbReference type="KEGG" id="pon:100174648"/>
<dbReference type="CTD" id="91252"/>
<dbReference type="GeneTree" id="ENSGT00940000157349"/>
<dbReference type="InParanoid" id="Q5R6I6"/>
<dbReference type="OrthoDB" id="200954at2759"/>
<dbReference type="Proteomes" id="UP000001595">
    <property type="component" value="Chromosome 11"/>
</dbReference>
<dbReference type="GO" id="GO:0030659">
    <property type="term" value="C:cytoplasmic vesicle membrane"/>
    <property type="evidence" value="ECO:0000250"/>
    <property type="project" value="UniProtKB"/>
</dbReference>
<dbReference type="GO" id="GO:0005789">
    <property type="term" value="C:endoplasmic reticulum membrane"/>
    <property type="evidence" value="ECO:0007669"/>
    <property type="project" value="UniProtKB-SubCell"/>
</dbReference>
<dbReference type="GO" id="GO:0000139">
    <property type="term" value="C:Golgi membrane"/>
    <property type="evidence" value="ECO:0007669"/>
    <property type="project" value="UniProtKB-SubCell"/>
</dbReference>
<dbReference type="GO" id="GO:0005385">
    <property type="term" value="F:zinc ion transmembrane transporter activity"/>
    <property type="evidence" value="ECO:0000250"/>
    <property type="project" value="UniProtKB"/>
</dbReference>
<dbReference type="GO" id="GO:0050873">
    <property type="term" value="P:brown fat cell differentiation"/>
    <property type="evidence" value="ECO:0000250"/>
    <property type="project" value="UniProtKB"/>
</dbReference>
<dbReference type="GO" id="GO:0006882">
    <property type="term" value="P:intracellular zinc ion homeostasis"/>
    <property type="evidence" value="ECO:0007669"/>
    <property type="project" value="TreeGrafter"/>
</dbReference>
<dbReference type="GO" id="GO:0006829">
    <property type="term" value="P:zinc ion transport"/>
    <property type="evidence" value="ECO:0000250"/>
    <property type="project" value="UniProtKB"/>
</dbReference>
<dbReference type="InterPro" id="IPR003689">
    <property type="entry name" value="ZIP"/>
</dbReference>
<dbReference type="PANTHER" id="PTHR16950">
    <property type="entry name" value="ZINC TRANSPORTER SLC39A7 HISTIDINE-RICH MEMBRANE PROTEIN KE4"/>
    <property type="match status" value="1"/>
</dbReference>
<dbReference type="PANTHER" id="PTHR16950:SF16">
    <property type="entry name" value="ZINC TRANSPORTER ZIP13"/>
    <property type="match status" value="1"/>
</dbReference>
<dbReference type="Pfam" id="PF02535">
    <property type="entry name" value="Zip"/>
    <property type="match status" value="1"/>
</dbReference>
<organism>
    <name type="scientific">Pongo abelii</name>
    <name type="common">Sumatran orangutan</name>
    <name type="synonym">Pongo pygmaeus abelii</name>
    <dbReference type="NCBI Taxonomy" id="9601"/>
    <lineage>
        <taxon>Eukaryota</taxon>
        <taxon>Metazoa</taxon>
        <taxon>Chordata</taxon>
        <taxon>Craniata</taxon>
        <taxon>Vertebrata</taxon>
        <taxon>Euteleostomi</taxon>
        <taxon>Mammalia</taxon>
        <taxon>Eutheria</taxon>
        <taxon>Euarchontoglires</taxon>
        <taxon>Primates</taxon>
        <taxon>Haplorrhini</taxon>
        <taxon>Catarrhini</taxon>
        <taxon>Hominidae</taxon>
        <taxon>Pongo</taxon>
    </lineage>
</organism>
<sequence>MPGCPCPGCGMAGPRLLFLTALALELLGRAGGSQPALRSRGTATACRLDNKESESWGALLSGERLDTWICSLLGSLMVGLSGVFPLLVIPLEMGTMLRSEAGAWHLKQLLSFALGGLLGNVFLHLLPEAWAYTCSASPGGEGQSLQQQQQLGLWVIAGILTFLALEKMFLDSKEEGTSQVSGYLNLLANTIDNFTHGLAVAASFLVSKKIGLLTTMAILLHEIPHEVGDFAILLRAGFDRWSAAKLQLSTALGGLLGAGFAICTQSPKGVEETAAWVLPFTSGGFLYIALVNVLPDLLEEEDPWRSLQQLLLLCAGIVVMVLFSLFVD</sequence>
<feature type="chain" id="PRO_0000312311" description="Zinc transporter ZIP13">
    <location>
        <begin position="1"/>
        <end position="328"/>
    </location>
</feature>
<feature type="topological domain" description="Lumenal" evidence="3">
    <location>
        <begin position="1"/>
        <end position="7"/>
    </location>
</feature>
<feature type="transmembrane region" description="Helical" evidence="3">
    <location>
        <begin position="8"/>
        <end position="28"/>
    </location>
</feature>
<feature type="topological domain" description="Cytoplasmic" evidence="3">
    <location>
        <begin position="29"/>
        <end position="68"/>
    </location>
</feature>
<feature type="transmembrane region" description="Helical" evidence="3">
    <location>
        <begin position="69"/>
        <end position="89"/>
    </location>
</feature>
<feature type="topological domain" description="Lumenal" evidence="3">
    <location>
        <begin position="90"/>
        <end position="108"/>
    </location>
</feature>
<feature type="transmembrane region" description="Helical" evidence="3">
    <location>
        <begin position="109"/>
        <end position="129"/>
    </location>
</feature>
<feature type="topological domain" description="Cytoplasmic" evidence="3">
    <location>
        <begin position="130"/>
        <end position="149"/>
    </location>
</feature>
<feature type="transmembrane region" description="Helical" evidence="3">
    <location>
        <begin position="150"/>
        <end position="170"/>
    </location>
</feature>
<feature type="topological domain" description="Lumenal" evidence="3">
    <location>
        <begin position="171"/>
        <end position="199"/>
    </location>
</feature>
<feature type="transmembrane region" description="Helical" evidence="3">
    <location>
        <begin position="200"/>
        <end position="220"/>
    </location>
</feature>
<feature type="topological domain" description="Cytoplasmic" evidence="3">
    <location>
        <begin position="221"/>
        <end position="242"/>
    </location>
</feature>
<feature type="transmembrane region" description="Helical" evidence="3">
    <location>
        <begin position="243"/>
        <end position="263"/>
    </location>
</feature>
<feature type="topological domain" description="Lumenal" evidence="3">
    <location>
        <begin position="264"/>
        <end position="273"/>
    </location>
</feature>
<feature type="transmembrane region" description="Helical" evidence="3">
    <location>
        <begin position="274"/>
        <end position="294"/>
    </location>
</feature>
<feature type="topological domain" description="Cytoplasmic" evidence="3">
    <location>
        <begin position="295"/>
        <end position="306"/>
    </location>
</feature>
<feature type="transmembrane region" description="Helical" evidence="3">
    <location>
        <begin position="307"/>
        <end position="327"/>
    </location>
</feature>
<feature type="topological domain" description="Lumenal" evidence="3">
    <location>
        <position position="328"/>
    </location>
</feature>
<feature type="short sequence motif" description="XEXPHE-motif">
    <location>
        <begin position="221"/>
        <end position="226"/>
    </location>
</feature>
<comment type="function">
    <text evidence="1">Functions as a zinc transporter transporting Zn(2+) from the Golgi apparatus to the cytosol and thus influences the zinc level at least in areas of the cytosol. May regulate beige adipocyte differentiation.</text>
</comment>
<comment type="catalytic activity">
    <reaction evidence="1">
        <text>Zn(2+)(in) = Zn(2+)(out)</text>
        <dbReference type="Rhea" id="RHEA:29351"/>
        <dbReference type="ChEBI" id="CHEBI:29105"/>
    </reaction>
</comment>
<comment type="subunit">
    <text evidence="2">Homodimer.</text>
</comment>
<comment type="subcellular location">
    <subcellularLocation>
        <location evidence="1">Golgi apparatus membrane</location>
        <topology evidence="2">Multi-pass membrane protein</topology>
    </subcellularLocation>
    <subcellularLocation>
        <location evidence="2">Cytoplasmic vesicle membrane</location>
    </subcellularLocation>
    <subcellularLocation>
        <location evidence="2">Endoplasmic reticulum membrane</location>
    </subcellularLocation>
</comment>
<comment type="similarity">
    <text evidence="4">Belongs to the ZIP transporter (TC 2.A.5) family.</text>
</comment>
<name>S39AD_PONAB</name>
<keyword id="KW-0968">Cytoplasmic vesicle</keyword>
<keyword id="KW-0256">Endoplasmic reticulum</keyword>
<keyword id="KW-0333">Golgi apparatus</keyword>
<keyword id="KW-0406">Ion transport</keyword>
<keyword id="KW-0472">Membrane</keyword>
<keyword id="KW-1185">Reference proteome</keyword>
<keyword id="KW-0812">Transmembrane</keyword>
<keyword id="KW-1133">Transmembrane helix</keyword>
<keyword id="KW-0813">Transport</keyword>
<keyword id="KW-0862">Zinc</keyword>
<keyword id="KW-0864">Zinc transport</keyword>
<reference key="1">
    <citation type="submission" date="2004-11" db="EMBL/GenBank/DDBJ databases">
        <authorList>
            <consortium name="The German cDNA consortium"/>
        </authorList>
    </citation>
    <scope>NUCLEOTIDE SEQUENCE [LARGE SCALE MRNA]</scope>
    <source>
        <tissue>Heart</tissue>
    </source>
</reference>